<reference key="1">
    <citation type="journal article" date="2007" name="Nature">
        <title>Evolution of genes and genomes on the Drosophila phylogeny.</title>
        <authorList>
            <consortium name="Drosophila 12 genomes consortium"/>
        </authorList>
    </citation>
    <scope>NUCLEOTIDE SEQUENCE [LARGE SCALE GENOMIC DNA]</scope>
    <source>
        <strain>Tucson 14021-0224.01</strain>
    </source>
</reference>
<feature type="chain" id="PRO_0000363795" description="Eukaryotic translation initiation factor 3 subunit B">
    <location>
        <begin position="1"/>
        <end position="690"/>
    </location>
</feature>
<feature type="domain" description="RRM" evidence="2">
    <location>
        <begin position="57"/>
        <end position="141"/>
    </location>
</feature>
<feature type="repeat" description="WD 1">
    <location>
        <begin position="207"/>
        <end position="246"/>
    </location>
</feature>
<feature type="repeat" description="WD 2">
    <location>
        <begin position="293"/>
        <end position="331"/>
    </location>
</feature>
<feature type="repeat" description="WD 3">
    <location>
        <begin position="334"/>
        <end position="369"/>
    </location>
</feature>
<feature type="repeat" description="WD 4">
    <location>
        <begin position="442"/>
        <end position="484"/>
    </location>
</feature>
<feature type="repeat" description="WD 5">
    <location>
        <begin position="530"/>
        <end position="575"/>
    </location>
</feature>
<feature type="region of interest" description="Disordered" evidence="3">
    <location>
        <begin position="1"/>
        <end position="36"/>
    </location>
</feature>
<feature type="coiled-coil region" evidence="2">
    <location>
        <begin position="595"/>
        <end position="645"/>
    </location>
</feature>
<feature type="compositionally biased region" description="Basic and acidic residues" evidence="3">
    <location>
        <begin position="1"/>
        <end position="11"/>
    </location>
</feature>
<feature type="compositionally biased region" description="Acidic residues" evidence="3">
    <location>
        <begin position="15"/>
        <end position="25"/>
    </location>
</feature>
<keyword id="KW-0175">Coiled coil</keyword>
<keyword id="KW-0963">Cytoplasm</keyword>
<keyword id="KW-0396">Initiation factor</keyword>
<keyword id="KW-0648">Protein biosynthesis</keyword>
<keyword id="KW-0677">Repeat</keyword>
<keyword id="KW-0694">RNA-binding</keyword>
<keyword id="KW-0853">WD repeat</keyword>
<gene>
    <name evidence="2" type="primary">eIF3b</name>
    <name evidence="2" type="synonym">eIF3-S9</name>
    <name type="ORF">GG21791</name>
</gene>
<comment type="function">
    <text evidence="2">RNA-binding component of the eukaryotic translation initiation factor 3 (eIF-3) complex, which is involved in protein synthesis of a specialized repertoire of mRNAs and, together with other initiation factors, stimulates binding of mRNA and methionyl-tRNAi to the 40S ribosome. The eIF-3 complex specifically targets and initiates translation of a subset of mRNAs involved in cell proliferation.</text>
</comment>
<comment type="subunit">
    <text evidence="1 2">Component of the eukaryotic translation initiation factor 3 (eIF-3) complex. The eIF-3 complex interacts with pix. Interacts with mxt (By similarity).</text>
</comment>
<comment type="subcellular location">
    <subcellularLocation>
        <location evidence="2">Cytoplasm</location>
    </subcellularLocation>
</comment>
<comment type="similarity">
    <text evidence="2">Belongs to the eIF-3 subunit B family.</text>
</comment>
<organism>
    <name type="scientific">Drosophila erecta</name>
    <name type="common">Fruit fly</name>
    <dbReference type="NCBI Taxonomy" id="7220"/>
    <lineage>
        <taxon>Eukaryota</taxon>
        <taxon>Metazoa</taxon>
        <taxon>Ecdysozoa</taxon>
        <taxon>Arthropoda</taxon>
        <taxon>Hexapoda</taxon>
        <taxon>Insecta</taxon>
        <taxon>Pterygota</taxon>
        <taxon>Neoptera</taxon>
        <taxon>Endopterygota</taxon>
        <taxon>Diptera</taxon>
        <taxon>Brachycera</taxon>
        <taxon>Muscomorpha</taxon>
        <taxon>Ephydroidea</taxon>
        <taxon>Drosophilidae</taxon>
        <taxon>Drosophila</taxon>
        <taxon>Sophophora</taxon>
    </lineage>
</organism>
<proteinExistence type="inferred from homology"/>
<evidence type="ECO:0000250" key="1">
    <source>
        <dbReference type="UniProtKB" id="Q0E940"/>
    </source>
</evidence>
<evidence type="ECO:0000255" key="2">
    <source>
        <dbReference type="HAMAP-Rule" id="MF_03001"/>
    </source>
</evidence>
<evidence type="ECO:0000256" key="3">
    <source>
        <dbReference type="SAM" id="MobiDB-lite"/>
    </source>
</evidence>
<protein>
    <recommendedName>
        <fullName evidence="2">Eukaryotic translation initiation factor 3 subunit B</fullName>
        <shortName evidence="2">eIF3b</shortName>
    </recommendedName>
    <alternativeName>
        <fullName evidence="2">Eukaryotic translation initiation factor 3 subunit 9</fullName>
    </alternativeName>
</protein>
<accession>B3NMI5</accession>
<name>EIF3B_DROER</name>
<dbReference type="EMBL" id="CH954179">
    <property type="protein sequence ID" value="EDV54924.1"/>
    <property type="molecule type" value="Genomic_DNA"/>
</dbReference>
<dbReference type="SMR" id="B3NMI5"/>
<dbReference type="EnsemblMetazoa" id="FBtr0141845">
    <property type="protein sequence ID" value="FBpp0140337"/>
    <property type="gene ID" value="FBgn0113969"/>
</dbReference>
<dbReference type="EnsemblMetazoa" id="XM_001974488.3">
    <property type="protein sequence ID" value="XP_001974524.1"/>
    <property type="gene ID" value="LOC6546731"/>
</dbReference>
<dbReference type="GeneID" id="6546731"/>
<dbReference type="KEGG" id="der:6546731"/>
<dbReference type="CTD" id="8662"/>
<dbReference type="eggNOG" id="KOG2314">
    <property type="taxonomic scope" value="Eukaryota"/>
</dbReference>
<dbReference type="HOGENOM" id="CLU_011152_1_0_1"/>
<dbReference type="OMA" id="LWGGPQF"/>
<dbReference type="OrthoDB" id="10250414at2759"/>
<dbReference type="PhylomeDB" id="B3NMI5"/>
<dbReference type="Proteomes" id="UP000008711">
    <property type="component" value="Unassembled WGS sequence"/>
</dbReference>
<dbReference type="GO" id="GO:0016282">
    <property type="term" value="C:eukaryotic 43S preinitiation complex"/>
    <property type="evidence" value="ECO:0007669"/>
    <property type="project" value="UniProtKB-UniRule"/>
</dbReference>
<dbReference type="GO" id="GO:0033290">
    <property type="term" value="C:eukaryotic 48S preinitiation complex"/>
    <property type="evidence" value="ECO:0007669"/>
    <property type="project" value="UniProtKB-UniRule"/>
</dbReference>
<dbReference type="GO" id="GO:0005852">
    <property type="term" value="C:eukaryotic translation initiation factor 3 complex"/>
    <property type="evidence" value="ECO:0000250"/>
    <property type="project" value="UniProtKB"/>
</dbReference>
<dbReference type="GO" id="GO:0003723">
    <property type="term" value="F:RNA binding"/>
    <property type="evidence" value="ECO:0007669"/>
    <property type="project" value="UniProtKB-UniRule"/>
</dbReference>
<dbReference type="GO" id="GO:0003743">
    <property type="term" value="F:translation initiation factor activity"/>
    <property type="evidence" value="ECO:0000250"/>
    <property type="project" value="UniProtKB"/>
</dbReference>
<dbReference type="GO" id="GO:0031369">
    <property type="term" value="F:translation initiation factor binding"/>
    <property type="evidence" value="ECO:0007669"/>
    <property type="project" value="InterPro"/>
</dbReference>
<dbReference type="GO" id="GO:0030707">
    <property type="term" value="P:follicle cell of egg chamber development"/>
    <property type="evidence" value="ECO:0007669"/>
    <property type="project" value="EnsemblMetazoa"/>
</dbReference>
<dbReference type="GO" id="GO:0001732">
    <property type="term" value="P:formation of cytoplasmic translation initiation complex"/>
    <property type="evidence" value="ECO:0007669"/>
    <property type="project" value="UniProtKB-UniRule"/>
</dbReference>
<dbReference type="GO" id="GO:0006446">
    <property type="term" value="P:regulation of translational initiation"/>
    <property type="evidence" value="ECO:0000250"/>
    <property type="project" value="UniProtKB"/>
</dbReference>
<dbReference type="CDD" id="cd12278">
    <property type="entry name" value="RRM_eIF3B"/>
    <property type="match status" value="1"/>
</dbReference>
<dbReference type="FunFam" id="2.130.10.10:FF:000884">
    <property type="entry name" value="Eukaryotic translation initiation factor 3 subunit B"/>
    <property type="match status" value="1"/>
</dbReference>
<dbReference type="FunFam" id="3.30.70.330:FF:000607">
    <property type="entry name" value="Eukaryotic translation initiation factor 3 subunit B"/>
    <property type="match status" value="1"/>
</dbReference>
<dbReference type="Gene3D" id="3.30.70.330">
    <property type="match status" value="1"/>
</dbReference>
<dbReference type="Gene3D" id="2.130.10.10">
    <property type="entry name" value="YVTN repeat-like/Quinoprotein amine dehydrogenase"/>
    <property type="match status" value="1"/>
</dbReference>
<dbReference type="HAMAP" id="MF_03001">
    <property type="entry name" value="eIF3b"/>
    <property type="match status" value="1"/>
</dbReference>
<dbReference type="InterPro" id="IPR011400">
    <property type="entry name" value="EIF3B"/>
</dbReference>
<dbReference type="InterPro" id="IPR034363">
    <property type="entry name" value="eIF3B_RRM"/>
</dbReference>
<dbReference type="InterPro" id="IPR012677">
    <property type="entry name" value="Nucleotide-bd_a/b_plait_sf"/>
</dbReference>
<dbReference type="InterPro" id="IPR035979">
    <property type="entry name" value="RBD_domain_sf"/>
</dbReference>
<dbReference type="InterPro" id="IPR000504">
    <property type="entry name" value="RRM_dom"/>
</dbReference>
<dbReference type="InterPro" id="IPR013979">
    <property type="entry name" value="TIF_beta_prop-like"/>
</dbReference>
<dbReference type="InterPro" id="IPR015943">
    <property type="entry name" value="WD40/YVTN_repeat-like_dom_sf"/>
</dbReference>
<dbReference type="PANTHER" id="PTHR14068">
    <property type="entry name" value="EUKARYOTIC TRANSLATION INITIATION FACTOR 3 EIF3 -RELATED"/>
    <property type="match status" value="1"/>
</dbReference>
<dbReference type="PANTHER" id="PTHR14068:SF0">
    <property type="entry name" value="EUKARYOTIC TRANSLATION INITIATION FACTOR 3 SUBUNIT B"/>
    <property type="match status" value="1"/>
</dbReference>
<dbReference type="Pfam" id="PF08662">
    <property type="entry name" value="eIF2A"/>
    <property type="match status" value="1"/>
</dbReference>
<dbReference type="Pfam" id="PF00076">
    <property type="entry name" value="RRM_1"/>
    <property type="match status" value="1"/>
</dbReference>
<dbReference type="PIRSF" id="PIRSF036424">
    <property type="entry name" value="eIF3b"/>
    <property type="match status" value="1"/>
</dbReference>
<dbReference type="SMART" id="SM00360">
    <property type="entry name" value="RRM"/>
    <property type="match status" value="1"/>
</dbReference>
<dbReference type="SUPFAM" id="SSF54928">
    <property type="entry name" value="RNA-binding domain, RBD"/>
    <property type="match status" value="1"/>
</dbReference>
<dbReference type="SUPFAM" id="SSF69322">
    <property type="entry name" value="Tricorn protease domain 2"/>
    <property type="match status" value="1"/>
</dbReference>
<dbReference type="PROSITE" id="PS50102">
    <property type="entry name" value="RRM"/>
    <property type="match status" value="1"/>
</dbReference>
<sequence length="690" mass="80311">MAKKKSEEHSGADANDSDYQEEPNFEDPPGFVDNISDEDLLGDMLAQRPSEADGVESVVVVDNIPKVEPERLDKLKLVINKLFSNYGDIVNVVYPVDEDGKTKGYAFMEYKQASQAEEAVKKLNNHRLDKNHTFAVNLFTDFQKYENIPEKWEPPTVQTFKVQSDLYNFINDPDTYDQYCVAAETAPNCVQVGFWQNVLPEPFELETRERFTDTFVKWSPLGTYVVTFHKPGVAIWGGSSFQKIQKFPHPGTQFVEFSPCENYLVTYGPTPTGQKIIIWDIRTGAEKRSFVADGMSVLSMFRWSHDDKFVARMGENSIHIYETPSFFLLDLKSIKIPGIRGFSWSPTDNVIAYWVEEQNQIPARVTLMEIPKKREIRNKNLFHVADCKLHWQKSGDYLCVKVDRYSKLKKDKKDLDVKFLGMFYNFEIFHMREKEIPVDSVEIRELILAFAWEPIGNKFSIIHGEQNSSNVSFYEVNKGVKPSLVKRLEKKSCTHLFWSPRGQFIVMANLTMGTFEFVDSTNDYIISASPDHFRASEVEWDPTGRYVVTGVSSWKVKEDTGFNMYTFQGRIIKRTILKNFVQFLWRPRPPTLLGEEKQKEIKKNLKKYYAAFEQKDRLRLTRASKELLEKRSQLRETFMEYRNKRIAEWADQKSRRIMLRGHVDTDNLETDEVDEEIVEFLVKEEVTLLE</sequence>